<accession>B4RKH1</accession>
<protein>
    <recommendedName>
        <fullName evidence="1">Deoxyuridine 5'-triphosphate nucleotidohydrolase</fullName>
        <shortName evidence="1">dUTPase</shortName>
        <ecNumber evidence="1">3.6.1.23</ecNumber>
    </recommendedName>
    <alternativeName>
        <fullName evidence="1">dUTP pyrophosphatase</fullName>
    </alternativeName>
</protein>
<comment type="function">
    <text evidence="1">This enzyme is involved in nucleotide metabolism: it produces dUMP, the immediate precursor of thymidine nucleotides and it decreases the intracellular concentration of dUTP so that uracil cannot be incorporated into DNA.</text>
</comment>
<comment type="catalytic activity">
    <reaction evidence="1">
        <text>dUTP + H2O = dUMP + diphosphate + H(+)</text>
        <dbReference type="Rhea" id="RHEA:10248"/>
        <dbReference type="ChEBI" id="CHEBI:15377"/>
        <dbReference type="ChEBI" id="CHEBI:15378"/>
        <dbReference type="ChEBI" id="CHEBI:33019"/>
        <dbReference type="ChEBI" id="CHEBI:61555"/>
        <dbReference type="ChEBI" id="CHEBI:246422"/>
        <dbReference type="EC" id="3.6.1.23"/>
    </reaction>
</comment>
<comment type="cofactor">
    <cofactor evidence="1">
        <name>Mg(2+)</name>
        <dbReference type="ChEBI" id="CHEBI:18420"/>
    </cofactor>
</comment>
<comment type="pathway">
    <text evidence="1">Pyrimidine metabolism; dUMP biosynthesis; dUMP from dCTP (dUTP route): step 2/2.</text>
</comment>
<comment type="similarity">
    <text evidence="1">Belongs to the dUTPase family.</text>
</comment>
<evidence type="ECO:0000255" key="1">
    <source>
        <dbReference type="HAMAP-Rule" id="MF_00116"/>
    </source>
</evidence>
<reference key="1">
    <citation type="journal article" date="2008" name="J. Bacteriol.">
        <title>Complete genome sequence of Neisseria gonorrhoeae NCCP11945.</title>
        <authorList>
            <person name="Chung G.T."/>
            <person name="Yoo J.S."/>
            <person name="Oh H.B."/>
            <person name="Lee Y.S."/>
            <person name="Cha S.H."/>
            <person name="Kim S.J."/>
            <person name="Yoo C.K."/>
        </authorList>
    </citation>
    <scope>NUCLEOTIDE SEQUENCE [LARGE SCALE GENOMIC DNA]</scope>
    <source>
        <strain>NCCP11945</strain>
    </source>
</reference>
<feature type="chain" id="PRO_1000094972" description="Deoxyuridine 5'-triphosphate nucleotidohydrolase">
    <location>
        <begin position="1"/>
        <end position="150"/>
    </location>
</feature>
<feature type="binding site" evidence="1">
    <location>
        <begin position="69"/>
        <end position="71"/>
    </location>
    <ligand>
        <name>substrate</name>
    </ligand>
</feature>
<feature type="binding site" evidence="1">
    <location>
        <position position="82"/>
    </location>
    <ligand>
        <name>substrate</name>
    </ligand>
</feature>
<feature type="binding site" evidence="1">
    <location>
        <begin position="86"/>
        <end position="88"/>
    </location>
    <ligand>
        <name>substrate</name>
    </ligand>
</feature>
<feature type="binding site" evidence="1">
    <location>
        <position position="96"/>
    </location>
    <ligand>
        <name>substrate</name>
    </ligand>
</feature>
<dbReference type="EC" id="3.6.1.23" evidence="1"/>
<dbReference type="EMBL" id="CP001050">
    <property type="protein sequence ID" value="ACF29322.1"/>
    <property type="molecule type" value="Genomic_DNA"/>
</dbReference>
<dbReference type="RefSeq" id="WP_003701071.1">
    <property type="nucleotide sequence ID" value="NC_011035.1"/>
</dbReference>
<dbReference type="SMR" id="B4RKH1"/>
<dbReference type="KEGG" id="ngk:NGK_0631"/>
<dbReference type="HOGENOM" id="CLU_068508_1_1_4"/>
<dbReference type="UniPathway" id="UPA00610">
    <property type="reaction ID" value="UER00666"/>
</dbReference>
<dbReference type="Proteomes" id="UP000002564">
    <property type="component" value="Chromosome"/>
</dbReference>
<dbReference type="GO" id="GO:0004170">
    <property type="term" value="F:dUTP diphosphatase activity"/>
    <property type="evidence" value="ECO:0007669"/>
    <property type="project" value="UniProtKB-UniRule"/>
</dbReference>
<dbReference type="GO" id="GO:0000287">
    <property type="term" value="F:magnesium ion binding"/>
    <property type="evidence" value="ECO:0007669"/>
    <property type="project" value="UniProtKB-UniRule"/>
</dbReference>
<dbReference type="GO" id="GO:0006226">
    <property type="term" value="P:dUMP biosynthetic process"/>
    <property type="evidence" value="ECO:0007669"/>
    <property type="project" value="UniProtKB-UniRule"/>
</dbReference>
<dbReference type="GO" id="GO:0046081">
    <property type="term" value="P:dUTP catabolic process"/>
    <property type="evidence" value="ECO:0007669"/>
    <property type="project" value="InterPro"/>
</dbReference>
<dbReference type="CDD" id="cd07557">
    <property type="entry name" value="trimeric_dUTPase"/>
    <property type="match status" value="1"/>
</dbReference>
<dbReference type="FunFam" id="2.70.40.10:FF:000002">
    <property type="entry name" value="dUTP diphosphatase"/>
    <property type="match status" value="1"/>
</dbReference>
<dbReference type="Gene3D" id="2.70.40.10">
    <property type="match status" value="1"/>
</dbReference>
<dbReference type="HAMAP" id="MF_00116">
    <property type="entry name" value="dUTPase_bact"/>
    <property type="match status" value="1"/>
</dbReference>
<dbReference type="InterPro" id="IPR008181">
    <property type="entry name" value="dUTPase"/>
</dbReference>
<dbReference type="InterPro" id="IPR029054">
    <property type="entry name" value="dUTPase-like"/>
</dbReference>
<dbReference type="InterPro" id="IPR036157">
    <property type="entry name" value="dUTPase-like_sf"/>
</dbReference>
<dbReference type="InterPro" id="IPR033704">
    <property type="entry name" value="dUTPase_trimeric"/>
</dbReference>
<dbReference type="NCBIfam" id="TIGR00576">
    <property type="entry name" value="dut"/>
    <property type="match status" value="1"/>
</dbReference>
<dbReference type="NCBIfam" id="NF001862">
    <property type="entry name" value="PRK00601.1"/>
    <property type="match status" value="1"/>
</dbReference>
<dbReference type="PANTHER" id="PTHR11241">
    <property type="entry name" value="DEOXYURIDINE 5'-TRIPHOSPHATE NUCLEOTIDOHYDROLASE"/>
    <property type="match status" value="1"/>
</dbReference>
<dbReference type="PANTHER" id="PTHR11241:SF0">
    <property type="entry name" value="DEOXYURIDINE 5'-TRIPHOSPHATE NUCLEOTIDOHYDROLASE"/>
    <property type="match status" value="1"/>
</dbReference>
<dbReference type="Pfam" id="PF00692">
    <property type="entry name" value="dUTPase"/>
    <property type="match status" value="1"/>
</dbReference>
<dbReference type="SUPFAM" id="SSF51283">
    <property type="entry name" value="dUTPase-like"/>
    <property type="match status" value="1"/>
</dbReference>
<keyword id="KW-0378">Hydrolase</keyword>
<keyword id="KW-0460">Magnesium</keyword>
<keyword id="KW-0479">Metal-binding</keyword>
<keyword id="KW-0546">Nucleotide metabolism</keyword>
<organism>
    <name type="scientific">Neisseria gonorrhoeae (strain NCCP11945)</name>
    <dbReference type="NCBI Taxonomy" id="521006"/>
    <lineage>
        <taxon>Bacteria</taxon>
        <taxon>Pseudomonadati</taxon>
        <taxon>Pseudomonadota</taxon>
        <taxon>Betaproteobacteria</taxon>
        <taxon>Neisseriales</taxon>
        <taxon>Neisseriaceae</taxon>
        <taxon>Neisseria</taxon>
    </lineage>
</organism>
<sequence length="150" mass="16164">MNIEVEMKVLDERMADFIPAYATEGSAGLDLRACLDEEVVLQPGETFLVPTGLAIYLANPAYTAVLLPRSGLGHKHGIVLGNLVGLIDSDYQGELKVSLWNRGSEPFTVKPFERIAQMVIVPVVQAGFKRVEEFVGSSRGEGGFGSTGSH</sequence>
<proteinExistence type="inferred from homology"/>
<gene>
    <name evidence="1" type="primary">dut</name>
    <name type="ordered locus">NGK_0631</name>
</gene>
<name>DUT_NEIG2</name>